<evidence type="ECO:0000255" key="1">
    <source>
        <dbReference type="HAMAP-Rule" id="MF_00500"/>
    </source>
</evidence>
<evidence type="ECO:0000305" key="2"/>
<dbReference type="EMBL" id="CP000087">
    <property type="protein sequence ID" value="ABE05117.1"/>
    <property type="molecule type" value="Genomic_DNA"/>
</dbReference>
<dbReference type="RefSeq" id="WP_011477695.1">
    <property type="nucleotide sequence ID" value="NC_007940.1"/>
</dbReference>
<dbReference type="SMR" id="Q1RHP7"/>
<dbReference type="KEGG" id="rbe:RBE_1036"/>
<dbReference type="eggNOG" id="COG0268">
    <property type="taxonomic scope" value="Bacteria"/>
</dbReference>
<dbReference type="HOGENOM" id="CLU_160655_3_0_5"/>
<dbReference type="OrthoDB" id="9807974at2"/>
<dbReference type="Proteomes" id="UP000001951">
    <property type="component" value="Chromosome"/>
</dbReference>
<dbReference type="GO" id="GO:0015935">
    <property type="term" value="C:small ribosomal subunit"/>
    <property type="evidence" value="ECO:0007669"/>
    <property type="project" value="TreeGrafter"/>
</dbReference>
<dbReference type="GO" id="GO:0070181">
    <property type="term" value="F:small ribosomal subunit rRNA binding"/>
    <property type="evidence" value="ECO:0007669"/>
    <property type="project" value="TreeGrafter"/>
</dbReference>
<dbReference type="GO" id="GO:0003735">
    <property type="term" value="F:structural constituent of ribosome"/>
    <property type="evidence" value="ECO:0007669"/>
    <property type="project" value="InterPro"/>
</dbReference>
<dbReference type="GO" id="GO:0006412">
    <property type="term" value="P:translation"/>
    <property type="evidence" value="ECO:0007669"/>
    <property type="project" value="UniProtKB-UniRule"/>
</dbReference>
<dbReference type="Gene3D" id="1.20.58.110">
    <property type="entry name" value="Ribosomal protein S20"/>
    <property type="match status" value="1"/>
</dbReference>
<dbReference type="HAMAP" id="MF_00500">
    <property type="entry name" value="Ribosomal_bS20"/>
    <property type="match status" value="1"/>
</dbReference>
<dbReference type="InterPro" id="IPR002583">
    <property type="entry name" value="Ribosomal_bS20"/>
</dbReference>
<dbReference type="InterPro" id="IPR036510">
    <property type="entry name" value="Ribosomal_bS20_sf"/>
</dbReference>
<dbReference type="NCBIfam" id="TIGR00029">
    <property type="entry name" value="S20"/>
    <property type="match status" value="1"/>
</dbReference>
<dbReference type="PANTHER" id="PTHR33398">
    <property type="entry name" value="30S RIBOSOMAL PROTEIN S20"/>
    <property type="match status" value="1"/>
</dbReference>
<dbReference type="PANTHER" id="PTHR33398:SF1">
    <property type="entry name" value="SMALL RIBOSOMAL SUBUNIT PROTEIN BS20C"/>
    <property type="match status" value="1"/>
</dbReference>
<dbReference type="Pfam" id="PF01649">
    <property type="entry name" value="Ribosomal_S20p"/>
    <property type="match status" value="1"/>
</dbReference>
<dbReference type="SUPFAM" id="SSF46992">
    <property type="entry name" value="Ribosomal protein S20"/>
    <property type="match status" value="1"/>
</dbReference>
<accession>Q1RHP7</accession>
<feature type="chain" id="PRO_0000260139" description="Small ribosomal subunit protein bS20">
    <location>
        <begin position="1"/>
        <end position="87"/>
    </location>
</feature>
<organism>
    <name type="scientific">Rickettsia bellii (strain RML369-C)</name>
    <dbReference type="NCBI Taxonomy" id="336407"/>
    <lineage>
        <taxon>Bacteria</taxon>
        <taxon>Pseudomonadati</taxon>
        <taxon>Pseudomonadota</taxon>
        <taxon>Alphaproteobacteria</taxon>
        <taxon>Rickettsiales</taxon>
        <taxon>Rickettsiaceae</taxon>
        <taxon>Rickettsieae</taxon>
        <taxon>Rickettsia</taxon>
        <taxon>belli group</taxon>
    </lineage>
</organism>
<reference key="1">
    <citation type="journal article" date="2006" name="PLoS Genet.">
        <title>Genome sequence of Rickettsia bellii illuminates the role of amoebae in gene exchanges between intracellular pathogens.</title>
        <authorList>
            <person name="Ogata H."/>
            <person name="La Scola B."/>
            <person name="Audic S."/>
            <person name="Renesto P."/>
            <person name="Blanc G."/>
            <person name="Robert C."/>
            <person name="Fournier P.-E."/>
            <person name="Claverie J.-M."/>
            <person name="Raoult D."/>
        </authorList>
    </citation>
    <scope>NUCLEOTIDE SEQUENCE [LARGE SCALE GENOMIC DNA]</scope>
    <source>
        <strain>RML369-C</strain>
    </source>
</reference>
<protein>
    <recommendedName>
        <fullName evidence="1">Small ribosomal subunit protein bS20</fullName>
    </recommendedName>
    <alternativeName>
        <fullName evidence="2">30S ribosomal protein S20</fullName>
    </alternativeName>
</protein>
<proteinExistence type="inferred from homology"/>
<comment type="function">
    <text evidence="1">Binds directly to 16S ribosomal RNA.</text>
</comment>
<comment type="similarity">
    <text evidence="1">Belongs to the bacterial ribosomal protein bS20 family.</text>
</comment>
<keyword id="KW-0687">Ribonucleoprotein</keyword>
<keyword id="KW-0689">Ribosomal protein</keyword>
<keyword id="KW-0694">RNA-binding</keyword>
<keyword id="KW-0699">rRNA-binding</keyword>
<sequence length="87" mass="9671">MANHSSAKKAARQTVKKTLVNKRRASAIKTFVKKVLHEINQGNKEEANSALVIAQSKIMQGVKKNIIKLNTASRKISKLSKKIKTMN</sequence>
<name>RS20_RICBR</name>
<gene>
    <name evidence="1" type="primary">rpsT</name>
    <name type="ordered locus">RBE_1036</name>
</gene>